<accession>Q6FJM0</accession>
<gene>
    <name type="primary">MED8</name>
    <name type="ordered locus">CAGL0M05247g</name>
</gene>
<comment type="function">
    <text evidence="1">Component of the Mediator complex, a coactivator involved in the regulated transcription of nearly all RNA polymerase II-dependent genes. Mediator functions as a bridge to convey information from gene-specific regulatory proteins to the basal RNA polymerase II transcription machinery. Mediator is recruited to promoters by direct interactions with regulatory proteins and serves as a scaffold for the assembly of a functional preinitiation complex with RNA polymerase II and the general transcription factors (By similarity).</text>
</comment>
<comment type="subunit">
    <text evidence="1">Component of the Mediator complex.</text>
</comment>
<comment type="subcellular location">
    <subcellularLocation>
        <location evidence="3">Nucleus</location>
    </subcellularLocation>
</comment>
<comment type="similarity">
    <text evidence="3">Belongs to the Mediator complex subunit 8 family.</text>
</comment>
<reference key="1">
    <citation type="journal article" date="2004" name="Nature">
        <title>Genome evolution in yeasts.</title>
        <authorList>
            <person name="Dujon B."/>
            <person name="Sherman D."/>
            <person name="Fischer G."/>
            <person name="Durrens P."/>
            <person name="Casaregola S."/>
            <person name="Lafontaine I."/>
            <person name="de Montigny J."/>
            <person name="Marck C."/>
            <person name="Neuveglise C."/>
            <person name="Talla E."/>
            <person name="Goffard N."/>
            <person name="Frangeul L."/>
            <person name="Aigle M."/>
            <person name="Anthouard V."/>
            <person name="Babour A."/>
            <person name="Barbe V."/>
            <person name="Barnay S."/>
            <person name="Blanchin S."/>
            <person name="Beckerich J.-M."/>
            <person name="Beyne E."/>
            <person name="Bleykasten C."/>
            <person name="Boisrame A."/>
            <person name="Boyer J."/>
            <person name="Cattolico L."/>
            <person name="Confanioleri F."/>
            <person name="de Daruvar A."/>
            <person name="Despons L."/>
            <person name="Fabre E."/>
            <person name="Fairhead C."/>
            <person name="Ferry-Dumazet H."/>
            <person name="Groppi A."/>
            <person name="Hantraye F."/>
            <person name="Hennequin C."/>
            <person name="Jauniaux N."/>
            <person name="Joyet P."/>
            <person name="Kachouri R."/>
            <person name="Kerrest A."/>
            <person name="Koszul R."/>
            <person name="Lemaire M."/>
            <person name="Lesur I."/>
            <person name="Ma L."/>
            <person name="Muller H."/>
            <person name="Nicaud J.-M."/>
            <person name="Nikolski M."/>
            <person name="Oztas S."/>
            <person name="Ozier-Kalogeropoulos O."/>
            <person name="Pellenz S."/>
            <person name="Potier S."/>
            <person name="Richard G.-F."/>
            <person name="Straub M.-L."/>
            <person name="Suleau A."/>
            <person name="Swennen D."/>
            <person name="Tekaia F."/>
            <person name="Wesolowski-Louvel M."/>
            <person name="Westhof E."/>
            <person name="Wirth B."/>
            <person name="Zeniou-Meyer M."/>
            <person name="Zivanovic Y."/>
            <person name="Bolotin-Fukuhara M."/>
            <person name="Thierry A."/>
            <person name="Bouchier C."/>
            <person name="Caudron B."/>
            <person name="Scarpelli C."/>
            <person name="Gaillardin C."/>
            <person name="Weissenbach J."/>
            <person name="Wincker P."/>
            <person name="Souciet J.-L."/>
        </authorList>
    </citation>
    <scope>NUCLEOTIDE SEQUENCE [LARGE SCALE GENOMIC DNA]</scope>
    <source>
        <strain>ATCC 2001 / BCRC 20586 / JCM 3761 / NBRC 0622 / NRRL Y-65 / CBS 138</strain>
    </source>
</reference>
<feature type="chain" id="PRO_0000304539" description="Mediator of RNA polymerase II transcription subunit 8">
    <location>
        <begin position="1"/>
        <end position="233"/>
    </location>
</feature>
<feature type="region of interest" description="Disordered" evidence="2">
    <location>
        <begin position="204"/>
        <end position="233"/>
    </location>
</feature>
<feature type="compositionally biased region" description="Polar residues" evidence="2">
    <location>
        <begin position="210"/>
        <end position="223"/>
    </location>
</feature>
<feature type="compositionally biased region" description="Basic and acidic residues" evidence="2">
    <location>
        <begin position="224"/>
        <end position="233"/>
    </location>
</feature>
<protein>
    <recommendedName>
        <fullName>Mediator of RNA polymerase II transcription subunit 8</fullName>
    </recommendedName>
    <alternativeName>
        <fullName>Mediator complex subunit 8</fullName>
    </alternativeName>
</protein>
<sequence>MSGINGALVEDIKPDYSGVPGPALDSVRMRLAQLTHSLRRIRDDLSRADLTQWYSLQSQINVTLSQLMSVTSTLQHFEDTLDSTIVYPLPKFPTTSHESLLTTLLRKKNIPEVEEWIKDAIEASGVDTNMMRDDEIEKILEKNNEDSKWALEVFAKEFEKRESNGDTADDLDVLGNALKPVKTSVRQRAQSPFQVEDVLKYMSRGEVDRGSSSQEGLSTNNEQSGDKDIIMAD</sequence>
<organism>
    <name type="scientific">Candida glabrata (strain ATCC 2001 / BCRC 20586 / JCM 3761 / NBRC 0622 / NRRL Y-65 / CBS 138)</name>
    <name type="common">Yeast</name>
    <name type="synonym">Nakaseomyces glabratus</name>
    <dbReference type="NCBI Taxonomy" id="284593"/>
    <lineage>
        <taxon>Eukaryota</taxon>
        <taxon>Fungi</taxon>
        <taxon>Dikarya</taxon>
        <taxon>Ascomycota</taxon>
        <taxon>Saccharomycotina</taxon>
        <taxon>Saccharomycetes</taxon>
        <taxon>Saccharomycetales</taxon>
        <taxon>Saccharomycetaceae</taxon>
        <taxon>Nakaseomyces</taxon>
    </lineage>
</organism>
<dbReference type="EMBL" id="CR380959">
    <property type="protein sequence ID" value="CAG62550.1"/>
    <property type="molecule type" value="Genomic_DNA"/>
</dbReference>
<dbReference type="RefSeq" id="XP_449574.1">
    <property type="nucleotide sequence ID" value="XM_449574.1"/>
</dbReference>
<dbReference type="SMR" id="Q6FJM0"/>
<dbReference type="FunCoup" id="Q6FJM0">
    <property type="interactions" value="186"/>
</dbReference>
<dbReference type="EnsemblFungi" id="CAGL0M05247g-T">
    <property type="protein sequence ID" value="CAGL0M05247g-T-p1"/>
    <property type="gene ID" value="CAGL0M05247g"/>
</dbReference>
<dbReference type="KEGG" id="cgr:2891586"/>
<dbReference type="CGD" id="CAL0137461">
    <property type="gene designation" value="CAGL0M05247g"/>
</dbReference>
<dbReference type="VEuPathDB" id="FungiDB:CAGL0M05247g"/>
<dbReference type="eggNOG" id="ENOG502S8U1">
    <property type="taxonomic scope" value="Eukaryota"/>
</dbReference>
<dbReference type="HOGENOM" id="CLU_108151_0_0_1"/>
<dbReference type="InParanoid" id="Q6FJM0"/>
<dbReference type="OMA" id="PQWYSLQ"/>
<dbReference type="Proteomes" id="UP000002428">
    <property type="component" value="Chromosome M"/>
</dbReference>
<dbReference type="GO" id="GO:0070847">
    <property type="term" value="C:core mediator complex"/>
    <property type="evidence" value="ECO:0007669"/>
    <property type="project" value="EnsemblFungi"/>
</dbReference>
<dbReference type="GO" id="GO:0016592">
    <property type="term" value="C:mediator complex"/>
    <property type="evidence" value="ECO:0007669"/>
    <property type="project" value="InterPro"/>
</dbReference>
<dbReference type="GO" id="GO:0000978">
    <property type="term" value="F:RNA polymerase II cis-regulatory region sequence-specific DNA binding"/>
    <property type="evidence" value="ECO:0007669"/>
    <property type="project" value="EnsemblFungi"/>
</dbReference>
<dbReference type="GO" id="GO:0017025">
    <property type="term" value="F:TBP-class protein binding"/>
    <property type="evidence" value="ECO:0007669"/>
    <property type="project" value="EnsemblFungi"/>
</dbReference>
<dbReference type="GO" id="GO:0003714">
    <property type="term" value="F:transcription corepressor activity"/>
    <property type="evidence" value="ECO:0007669"/>
    <property type="project" value="EnsemblFungi"/>
</dbReference>
<dbReference type="GO" id="GO:0000122">
    <property type="term" value="P:negative regulation of transcription by RNA polymerase II"/>
    <property type="evidence" value="ECO:0007669"/>
    <property type="project" value="EnsemblFungi"/>
</dbReference>
<dbReference type="GO" id="GO:0032968">
    <property type="term" value="P:positive regulation of transcription elongation by RNA polymerase II"/>
    <property type="evidence" value="ECO:0007669"/>
    <property type="project" value="EnsemblFungi"/>
</dbReference>
<dbReference type="GO" id="GO:0060261">
    <property type="term" value="P:positive regulation of transcription initiation by RNA polymerase II"/>
    <property type="evidence" value="ECO:0007669"/>
    <property type="project" value="EnsemblFungi"/>
</dbReference>
<dbReference type="GO" id="GO:0051123">
    <property type="term" value="P:RNA polymerase II preinitiation complex assembly"/>
    <property type="evidence" value="ECO:0007669"/>
    <property type="project" value="EnsemblFungi"/>
</dbReference>
<dbReference type="Gene3D" id="1.20.58.1710">
    <property type="match status" value="1"/>
</dbReference>
<dbReference type="Gene3D" id="6.10.250.2610">
    <property type="match status" value="1"/>
</dbReference>
<dbReference type="InterPro" id="IPR019364">
    <property type="entry name" value="Mediatior_Med8_fun/met"/>
</dbReference>
<dbReference type="PANTHER" id="PTHR13074">
    <property type="entry name" value="MEDIATOR OF RNA POLYMERASE II TRANSCRIPTION SUBUNIT 8"/>
    <property type="match status" value="1"/>
</dbReference>
<dbReference type="PANTHER" id="PTHR13074:SF9">
    <property type="entry name" value="MEDIATOR OF RNA POLYMERASE II TRANSCRIPTION SUBUNIT 8"/>
    <property type="match status" value="1"/>
</dbReference>
<dbReference type="Pfam" id="PF10232">
    <property type="entry name" value="Med8"/>
    <property type="match status" value="1"/>
</dbReference>
<name>MED8_CANGA</name>
<proteinExistence type="inferred from homology"/>
<keyword id="KW-0010">Activator</keyword>
<keyword id="KW-0539">Nucleus</keyword>
<keyword id="KW-1185">Reference proteome</keyword>
<keyword id="KW-0804">Transcription</keyword>
<keyword id="KW-0805">Transcription regulation</keyword>
<evidence type="ECO:0000250" key="1"/>
<evidence type="ECO:0000256" key="2">
    <source>
        <dbReference type="SAM" id="MobiDB-lite"/>
    </source>
</evidence>
<evidence type="ECO:0000305" key="3"/>